<organism>
    <name type="scientific">Ralstonia nicotianae (strain ATCC BAA-1114 / GMI1000)</name>
    <name type="common">Ralstonia solanacearum</name>
    <dbReference type="NCBI Taxonomy" id="267608"/>
    <lineage>
        <taxon>Bacteria</taxon>
        <taxon>Pseudomonadati</taxon>
        <taxon>Pseudomonadota</taxon>
        <taxon>Betaproteobacteria</taxon>
        <taxon>Burkholderiales</taxon>
        <taxon>Burkholderiaceae</taxon>
        <taxon>Ralstonia</taxon>
        <taxon>Ralstonia solanacearum species complex</taxon>
    </lineage>
</organism>
<keyword id="KW-0028">Amino-acid biosynthesis</keyword>
<keyword id="KW-0055">Arginine biosynthesis</keyword>
<keyword id="KW-0067">ATP-binding</keyword>
<keyword id="KW-0963">Cytoplasm</keyword>
<keyword id="KW-0418">Kinase</keyword>
<keyword id="KW-0547">Nucleotide-binding</keyword>
<keyword id="KW-1185">Reference proteome</keyword>
<keyword id="KW-0808">Transferase</keyword>
<feature type="chain" id="PRO_0000112653" description="Acetylglutamate kinase">
    <location>
        <begin position="1"/>
        <end position="310"/>
    </location>
</feature>
<feature type="binding site" evidence="1">
    <location>
        <begin position="83"/>
        <end position="84"/>
    </location>
    <ligand>
        <name>substrate</name>
    </ligand>
</feature>
<feature type="binding site" evidence="1">
    <location>
        <position position="105"/>
    </location>
    <ligand>
        <name>substrate</name>
    </ligand>
</feature>
<feature type="binding site" evidence="1">
    <location>
        <position position="207"/>
    </location>
    <ligand>
        <name>substrate</name>
    </ligand>
</feature>
<feature type="site" description="Transition state stabilizer" evidence="1">
    <location>
        <position position="48"/>
    </location>
</feature>
<feature type="site" description="Transition state stabilizer" evidence="1">
    <location>
        <position position="267"/>
    </location>
</feature>
<accession>Q8Y3E7</accession>
<protein>
    <recommendedName>
        <fullName evidence="1">Acetylglutamate kinase</fullName>
        <ecNumber evidence="1">2.7.2.8</ecNumber>
    </recommendedName>
    <alternativeName>
        <fullName evidence="1">N-acetyl-L-glutamate 5-phosphotransferase</fullName>
    </alternativeName>
    <alternativeName>
        <fullName evidence="1">NAG kinase</fullName>
        <shortName evidence="1">NAGK</shortName>
    </alternativeName>
</protein>
<evidence type="ECO:0000255" key="1">
    <source>
        <dbReference type="HAMAP-Rule" id="MF_00082"/>
    </source>
</evidence>
<comment type="function">
    <text evidence="1">Catalyzes the ATP-dependent phosphorylation of N-acetyl-L-glutamate.</text>
</comment>
<comment type="catalytic activity">
    <reaction evidence="1">
        <text>N-acetyl-L-glutamate + ATP = N-acetyl-L-glutamyl 5-phosphate + ADP</text>
        <dbReference type="Rhea" id="RHEA:14629"/>
        <dbReference type="ChEBI" id="CHEBI:30616"/>
        <dbReference type="ChEBI" id="CHEBI:44337"/>
        <dbReference type="ChEBI" id="CHEBI:57936"/>
        <dbReference type="ChEBI" id="CHEBI:456216"/>
        <dbReference type="EC" id="2.7.2.8"/>
    </reaction>
</comment>
<comment type="pathway">
    <text evidence="1">Amino-acid biosynthesis; L-arginine biosynthesis; N(2)-acetyl-L-ornithine from L-glutamate: step 2/4.</text>
</comment>
<comment type="subcellular location">
    <subcellularLocation>
        <location evidence="1">Cytoplasm</location>
    </subcellularLocation>
</comment>
<comment type="similarity">
    <text evidence="1">Belongs to the acetylglutamate kinase family. ArgB subfamily.</text>
</comment>
<proteinExistence type="inferred from homology"/>
<sequence>MTASVAAAPDPAGLDPELAHIAPALKAEILAQALPYIRKFHGKTIVIKYGGNAMTEEKLKHGFARDVILLKLVGMNPVVVHGGGPQIDDALKKVGKTGTFIQGMRVTDEETMEVVEWVLGGEVQQDIVMLINQYGGQAVGLTGKDGGLIRAKKLKMPDREQPGQFIDIGFVGDIETINPAVVRALQDDAFIPVISPIGFSDDGQAYNINADVVAGKMAEILKAEKLVMMTNIPGVMDKQGNLLTDLSAREIDELFADGTISGGMLPKISSALDAAKSGVNSVHIIDGRIEHSLLLEILTEQAFGTMIRSH</sequence>
<reference key="1">
    <citation type="journal article" date="2002" name="Nature">
        <title>Genome sequence of the plant pathogen Ralstonia solanacearum.</title>
        <authorList>
            <person name="Salanoubat M."/>
            <person name="Genin S."/>
            <person name="Artiguenave F."/>
            <person name="Gouzy J."/>
            <person name="Mangenot S."/>
            <person name="Arlat M."/>
            <person name="Billault A."/>
            <person name="Brottier P."/>
            <person name="Camus J.-C."/>
            <person name="Cattolico L."/>
            <person name="Chandler M."/>
            <person name="Choisne N."/>
            <person name="Claudel-Renard C."/>
            <person name="Cunnac S."/>
            <person name="Demange N."/>
            <person name="Gaspin C."/>
            <person name="Lavie M."/>
            <person name="Moisan A."/>
            <person name="Robert C."/>
            <person name="Saurin W."/>
            <person name="Schiex T."/>
            <person name="Siguier P."/>
            <person name="Thebault P."/>
            <person name="Whalen M."/>
            <person name="Wincker P."/>
            <person name="Levy M."/>
            <person name="Weissenbach J."/>
            <person name="Boucher C.A."/>
        </authorList>
    </citation>
    <scope>NUCLEOTIDE SEQUENCE [LARGE SCALE GENOMIC DNA]</scope>
    <source>
        <strain>ATCC BAA-1114 / GMI1000</strain>
    </source>
</reference>
<name>ARGB_RALN1</name>
<gene>
    <name evidence="1" type="primary">argB</name>
    <name type="ordered locus">RSc0033</name>
    <name type="ORF">RS01856</name>
</gene>
<dbReference type="EC" id="2.7.2.8" evidence="1"/>
<dbReference type="EMBL" id="AL646052">
    <property type="protein sequence ID" value="CAD13561.1"/>
    <property type="molecule type" value="Genomic_DNA"/>
</dbReference>
<dbReference type="RefSeq" id="WP_011000000.1">
    <property type="nucleotide sequence ID" value="NC_003295.1"/>
</dbReference>
<dbReference type="SMR" id="Q8Y3E7"/>
<dbReference type="STRING" id="267608.RSc0033"/>
<dbReference type="DNASU" id="1218835"/>
<dbReference type="EnsemblBacteria" id="CAD13561">
    <property type="protein sequence ID" value="CAD13561"/>
    <property type="gene ID" value="RSc0033"/>
</dbReference>
<dbReference type="KEGG" id="rso:RSc0033"/>
<dbReference type="eggNOG" id="COG0548">
    <property type="taxonomic scope" value="Bacteria"/>
</dbReference>
<dbReference type="HOGENOM" id="CLU_053680_0_0_4"/>
<dbReference type="UniPathway" id="UPA00068">
    <property type="reaction ID" value="UER00107"/>
</dbReference>
<dbReference type="Proteomes" id="UP000001436">
    <property type="component" value="Chromosome"/>
</dbReference>
<dbReference type="GO" id="GO:0005737">
    <property type="term" value="C:cytoplasm"/>
    <property type="evidence" value="ECO:0007669"/>
    <property type="project" value="UniProtKB-SubCell"/>
</dbReference>
<dbReference type="GO" id="GO:0003991">
    <property type="term" value="F:acetylglutamate kinase activity"/>
    <property type="evidence" value="ECO:0007669"/>
    <property type="project" value="UniProtKB-UniRule"/>
</dbReference>
<dbReference type="GO" id="GO:0005524">
    <property type="term" value="F:ATP binding"/>
    <property type="evidence" value="ECO:0007669"/>
    <property type="project" value="UniProtKB-UniRule"/>
</dbReference>
<dbReference type="GO" id="GO:0042450">
    <property type="term" value="P:arginine biosynthetic process via ornithine"/>
    <property type="evidence" value="ECO:0007669"/>
    <property type="project" value="UniProtKB-UniRule"/>
</dbReference>
<dbReference type="GO" id="GO:0006526">
    <property type="term" value="P:L-arginine biosynthetic process"/>
    <property type="evidence" value="ECO:0007669"/>
    <property type="project" value="UniProtKB-UniPathway"/>
</dbReference>
<dbReference type="CDD" id="cd04250">
    <property type="entry name" value="AAK_NAGK-C"/>
    <property type="match status" value="1"/>
</dbReference>
<dbReference type="FunFam" id="3.40.1160.10:FF:000004">
    <property type="entry name" value="Acetylglutamate kinase"/>
    <property type="match status" value="1"/>
</dbReference>
<dbReference type="Gene3D" id="3.40.1160.10">
    <property type="entry name" value="Acetylglutamate kinase-like"/>
    <property type="match status" value="1"/>
</dbReference>
<dbReference type="HAMAP" id="MF_00082">
    <property type="entry name" value="ArgB"/>
    <property type="match status" value="1"/>
</dbReference>
<dbReference type="InterPro" id="IPR036393">
    <property type="entry name" value="AceGlu_kinase-like_sf"/>
</dbReference>
<dbReference type="InterPro" id="IPR004662">
    <property type="entry name" value="AcgluKinase_fam"/>
</dbReference>
<dbReference type="InterPro" id="IPR037528">
    <property type="entry name" value="ArgB"/>
</dbReference>
<dbReference type="InterPro" id="IPR001048">
    <property type="entry name" value="Asp/Glu/Uridylate_kinase"/>
</dbReference>
<dbReference type="InterPro" id="IPR041727">
    <property type="entry name" value="NAGK-C"/>
</dbReference>
<dbReference type="NCBIfam" id="TIGR00761">
    <property type="entry name" value="argB"/>
    <property type="match status" value="1"/>
</dbReference>
<dbReference type="PANTHER" id="PTHR23342">
    <property type="entry name" value="N-ACETYLGLUTAMATE SYNTHASE"/>
    <property type="match status" value="1"/>
</dbReference>
<dbReference type="PANTHER" id="PTHR23342:SF0">
    <property type="entry name" value="N-ACETYLGLUTAMATE SYNTHASE, MITOCHONDRIAL"/>
    <property type="match status" value="1"/>
</dbReference>
<dbReference type="Pfam" id="PF00696">
    <property type="entry name" value="AA_kinase"/>
    <property type="match status" value="1"/>
</dbReference>
<dbReference type="PIRSF" id="PIRSF000728">
    <property type="entry name" value="NAGK"/>
    <property type="match status" value="1"/>
</dbReference>
<dbReference type="SUPFAM" id="SSF53633">
    <property type="entry name" value="Carbamate kinase-like"/>
    <property type="match status" value="1"/>
</dbReference>